<comment type="function">
    <text evidence="1">Plays an important role in the de novo pathway and in the salvage pathway of purine nucleotide biosynthesis. Catalyzes the first committed step in the biosynthesis of AMP from IMP (By similarity).</text>
</comment>
<comment type="catalytic activity">
    <reaction evidence="2">
        <text>IMP + L-aspartate + GTP = N(6)-(1,2-dicarboxyethyl)-AMP + GDP + phosphate + 2 H(+)</text>
        <dbReference type="Rhea" id="RHEA:15753"/>
        <dbReference type="ChEBI" id="CHEBI:15378"/>
        <dbReference type="ChEBI" id="CHEBI:29991"/>
        <dbReference type="ChEBI" id="CHEBI:37565"/>
        <dbReference type="ChEBI" id="CHEBI:43474"/>
        <dbReference type="ChEBI" id="CHEBI:57567"/>
        <dbReference type="ChEBI" id="CHEBI:58053"/>
        <dbReference type="ChEBI" id="CHEBI:58189"/>
        <dbReference type="EC" id="6.3.4.4"/>
    </reaction>
</comment>
<comment type="cofactor">
    <cofactor evidence="2">
        <name>Mg(2+)</name>
        <dbReference type="ChEBI" id="CHEBI:18420"/>
    </cofactor>
    <text evidence="2">Binds 1 Mg(2+) ion per subunit.</text>
</comment>
<comment type="pathway">
    <text evidence="2">Purine metabolism; AMP biosynthesis via de novo pathway; AMP from IMP: step 1/2.</text>
</comment>
<comment type="subunit">
    <text evidence="2">Homodimer.</text>
</comment>
<comment type="subcellular location">
    <subcellularLocation>
        <location evidence="2">Plastid</location>
        <location evidence="2">Chloroplast</location>
    </subcellularLocation>
</comment>
<comment type="similarity">
    <text evidence="2">Belongs to the adenylosuccinate synthetase family.</text>
</comment>
<proteinExistence type="inferred from homology"/>
<evidence type="ECO:0000250" key="1"/>
<evidence type="ECO:0000255" key="2">
    <source>
        <dbReference type="HAMAP-Rule" id="MF_03125"/>
    </source>
</evidence>
<feature type="transit peptide" description="Chloroplast" evidence="2">
    <location>
        <begin position="1"/>
        <end position="73"/>
    </location>
</feature>
<feature type="chain" id="PRO_0000399281" description="Adenylosuccinate synthetase 1, chloroplastic">
    <location>
        <begin position="74"/>
        <end position="514"/>
    </location>
</feature>
<feature type="active site" description="Proton acceptor" evidence="2">
    <location>
        <position position="101"/>
    </location>
</feature>
<feature type="active site" description="Proton donor" evidence="2">
    <location>
        <position position="129"/>
    </location>
</feature>
<feature type="binding site" evidence="2">
    <location>
        <begin position="100"/>
        <end position="106"/>
    </location>
    <ligand>
        <name>GTP</name>
        <dbReference type="ChEBI" id="CHEBI:37565"/>
    </ligand>
</feature>
<feature type="binding site" description="in other chain" evidence="2">
    <location>
        <begin position="101"/>
        <end position="104"/>
    </location>
    <ligand>
        <name>IMP</name>
        <dbReference type="ChEBI" id="CHEBI:58053"/>
        <note>ligand shared between dimeric partners</note>
    </ligand>
</feature>
<feature type="binding site" evidence="2">
    <location>
        <position position="101"/>
    </location>
    <ligand>
        <name>Mg(2+)</name>
        <dbReference type="ChEBI" id="CHEBI:18420"/>
    </ligand>
</feature>
<feature type="binding site" description="in other chain" evidence="2">
    <location>
        <begin position="126"/>
        <end position="129"/>
    </location>
    <ligand>
        <name>IMP</name>
        <dbReference type="ChEBI" id="CHEBI:58053"/>
        <note>ligand shared between dimeric partners</note>
    </ligand>
</feature>
<feature type="binding site" evidence="2">
    <location>
        <begin position="128"/>
        <end position="130"/>
    </location>
    <ligand>
        <name>GTP</name>
        <dbReference type="ChEBI" id="CHEBI:37565"/>
    </ligand>
</feature>
<feature type="binding site" evidence="2">
    <location>
        <position position="128"/>
    </location>
    <ligand>
        <name>Mg(2+)</name>
        <dbReference type="ChEBI" id="CHEBI:18420"/>
    </ligand>
</feature>
<feature type="binding site" description="in other chain" evidence="2">
    <location>
        <position position="218"/>
    </location>
    <ligand>
        <name>IMP</name>
        <dbReference type="ChEBI" id="CHEBI:58053"/>
        <note>ligand shared between dimeric partners</note>
    </ligand>
</feature>
<feature type="binding site" evidence="2">
    <location>
        <position position="232"/>
    </location>
    <ligand>
        <name>IMP</name>
        <dbReference type="ChEBI" id="CHEBI:58053"/>
        <note>ligand shared between dimeric partners</note>
    </ligand>
</feature>
<feature type="binding site" description="in other chain" evidence="2">
    <location>
        <position position="312"/>
    </location>
    <ligand>
        <name>IMP</name>
        <dbReference type="ChEBI" id="CHEBI:58053"/>
        <note>ligand shared between dimeric partners</note>
    </ligand>
</feature>
<feature type="binding site" description="in other chain" evidence="2">
    <location>
        <position position="327"/>
    </location>
    <ligand>
        <name>IMP</name>
        <dbReference type="ChEBI" id="CHEBI:58053"/>
        <note>ligand shared between dimeric partners</note>
    </ligand>
</feature>
<feature type="binding site" evidence="2">
    <location>
        <begin position="387"/>
        <end position="393"/>
    </location>
    <ligand>
        <name>substrate</name>
    </ligand>
</feature>
<feature type="binding site" description="in other chain" evidence="2">
    <location>
        <position position="391"/>
    </location>
    <ligand>
        <name>IMP</name>
        <dbReference type="ChEBI" id="CHEBI:58053"/>
        <note>ligand shared between dimeric partners</note>
    </ligand>
</feature>
<feature type="binding site" evidence="2">
    <location>
        <position position="393"/>
    </location>
    <ligand>
        <name>GTP</name>
        <dbReference type="ChEBI" id="CHEBI:37565"/>
    </ligand>
</feature>
<feature type="binding site" evidence="2">
    <location>
        <begin position="419"/>
        <end position="421"/>
    </location>
    <ligand>
        <name>GTP</name>
        <dbReference type="ChEBI" id="CHEBI:37565"/>
    </ligand>
</feature>
<feature type="binding site" evidence="2">
    <location>
        <begin position="502"/>
        <end position="504"/>
    </location>
    <ligand>
        <name>GTP</name>
        <dbReference type="ChEBI" id="CHEBI:37565"/>
    </ligand>
</feature>
<accession>A9SCV9</accession>
<reference key="1">
    <citation type="journal article" date="2008" name="Science">
        <title>The Physcomitrella genome reveals evolutionary insights into the conquest of land by plants.</title>
        <authorList>
            <person name="Rensing S.A."/>
            <person name="Lang D."/>
            <person name="Zimmer A.D."/>
            <person name="Terry A."/>
            <person name="Salamov A."/>
            <person name="Shapiro H."/>
            <person name="Nishiyama T."/>
            <person name="Perroud P.-F."/>
            <person name="Lindquist E.A."/>
            <person name="Kamisugi Y."/>
            <person name="Tanahashi T."/>
            <person name="Sakakibara K."/>
            <person name="Fujita T."/>
            <person name="Oishi K."/>
            <person name="Shin-I T."/>
            <person name="Kuroki Y."/>
            <person name="Toyoda A."/>
            <person name="Suzuki Y."/>
            <person name="Hashimoto S.-I."/>
            <person name="Yamaguchi K."/>
            <person name="Sugano S."/>
            <person name="Kohara Y."/>
            <person name="Fujiyama A."/>
            <person name="Anterola A."/>
            <person name="Aoki S."/>
            <person name="Ashton N."/>
            <person name="Barbazuk W.B."/>
            <person name="Barker E."/>
            <person name="Bennetzen J.L."/>
            <person name="Blankenship R."/>
            <person name="Cho S.H."/>
            <person name="Dutcher S.K."/>
            <person name="Estelle M."/>
            <person name="Fawcett J.A."/>
            <person name="Gundlach H."/>
            <person name="Hanada K."/>
            <person name="Heyl A."/>
            <person name="Hicks K.A."/>
            <person name="Hughes J."/>
            <person name="Lohr M."/>
            <person name="Mayer K."/>
            <person name="Melkozernov A."/>
            <person name="Murata T."/>
            <person name="Nelson D.R."/>
            <person name="Pils B."/>
            <person name="Prigge M."/>
            <person name="Reiss B."/>
            <person name="Renner T."/>
            <person name="Rombauts S."/>
            <person name="Rushton P.J."/>
            <person name="Sanderfoot A."/>
            <person name="Schween G."/>
            <person name="Shiu S.-H."/>
            <person name="Stueber K."/>
            <person name="Theodoulou F.L."/>
            <person name="Tu H."/>
            <person name="Van de Peer Y."/>
            <person name="Verrier P.J."/>
            <person name="Waters E."/>
            <person name="Wood A."/>
            <person name="Yang L."/>
            <person name="Cove D."/>
            <person name="Cuming A.C."/>
            <person name="Hasebe M."/>
            <person name="Lucas S."/>
            <person name="Mishler B.D."/>
            <person name="Reski R."/>
            <person name="Grigoriev I.V."/>
            <person name="Quatrano R.S."/>
            <person name="Boore J.L."/>
        </authorList>
    </citation>
    <scope>NUCLEOTIDE SEQUENCE [LARGE SCALE GENOMIC DNA]</scope>
    <source>
        <strain>cv. Gransden 2004</strain>
    </source>
</reference>
<name>PURA1_PHYPA</name>
<keyword id="KW-0150">Chloroplast</keyword>
<keyword id="KW-0342">GTP-binding</keyword>
<keyword id="KW-0436">Ligase</keyword>
<keyword id="KW-0460">Magnesium</keyword>
<keyword id="KW-0479">Metal-binding</keyword>
<keyword id="KW-0547">Nucleotide-binding</keyword>
<keyword id="KW-0934">Plastid</keyword>
<keyword id="KW-0658">Purine biosynthesis</keyword>
<keyword id="KW-1185">Reference proteome</keyword>
<keyword id="KW-0809">Transit peptide</keyword>
<gene>
    <name evidence="2" type="primary">PURA1</name>
    <name type="ORF">PHYPADRAFT_210943</name>
</gene>
<protein>
    <recommendedName>
        <fullName evidence="2">Adenylosuccinate synthetase 1, chloroplastic</fullName>
        <shortName evidence="2">AMPSase 1</shortName>
        <shortName evidence="2">AdSS 1</shortName>
        <ecNumber evidence="2">6.3.4.4</ecNumber>
    </recommendedName>
    <alternativeName>
        <fullName evidence="2">IMP--aspartate ligase 1</fullName>
    </alternativeName>
</protein>
<dbReference type="EC" id="6.3.4.4" evidence="2"/>
<dbReference type="EMBL" id="DS544955">
    <property type="protein sequence ID" value="EDQ71058.1"/>
    <property type="molecule type" value="Genomic_DNA"/>
</dbReference>
<dbReference type="RefSeq" id="XP_001764217.1">
    <property type="nucleotide sequence ID" value="XM_001764165.1"/>
</dbReference>
<dbReference type="SMR" id="A9SCV9"/>
<dbReference type="FunCoup" id="A9SCV9">
    <property type="interactions" value="3659"/>
</dbReference>
<dbReference type="PaxDb" id="3218-PP1S66_188V6.1"/>
<dbReference type="EnsemblPlants" id="Pp3c15_23980V3.1">
    <property type="protein sequence ID" value="Pp3c15_23980V3.1"/>
    <property type="gene ID" value="Pp3c15_23980"/>
</dbReference>
<dbReference type="Gramene" id="Pp3c15_23980V3.1">
    <property type="protein sequence ID" value="Pp3c15_23980V3.1"/>
    <property type="gene ID" value="Pp3c15_23980"/>
</dbReference>
<dbReference type="eggNOG" id="KOG1355">
    <property type="taxonomic scope" value="Eukaryota"/>
</dbReference>
<dbReference type="HOGENOM" id="CLU_029848_0_0_1"/>
<dbReference type="InParanoid" id="A9SCV9"/>
<dbReference type="OMA" id="QSYVRFL"/>
<dbReference type="UniPathway" id="UPA00075">
    <property type="reaction ID" value="UER00335"/>
</dbReference>
<dbReference type="Proteomes" id="UP000006727">
    <property type="component" value="Chromosome 15"/>
</dbReference>
<dbReference type="GO" id="GO:0009507">
    <property type="term" value="C:chloroplast"/>
    <property type="evidence" value="ECO:0007669"/>
    <property type="project" value="UniProtKB-SubCell"/>
</dbReference>
<dbReference type="GO" id="GO:0005737">
    <property type="term" value="C:cytoplasm"/>
    <property type="evidence" value="ECO:0000318"/>
    <property type="project" value="GO_Central"/>
</dbReference>
<dbReference type="GO" id="GO:0004019">
    <property type="term" value="F:adenylosuccinate synthase activity"/>
    <property type="evidence" value="ECO:0000318"/>
    <property type="project" value="GO_Central"/>
</dbReference>
<dbReference type="GO" id="GO:0005525">
    <property type="term" value="F:GTP binding"/>
    <property type="evidence" value="ECO:0007669"/>
    <property type="project" value="UniProtKB-UniRule"/>
</dbReference>
<dbReference type="GO" id="GO:0000287">
    <property type="term" value="F:magnesium ion binding"/>
    <property type="evidence" value="ECO:0007669"/>
    <property type="project" value="UniProtKB-UniRule"/>
</dbReference>
<dbReference type="GO" id="GO:0044208">
    <property type="term" value="P:'de novo' AMP biosynthetic process"/>
    <property type="evidence" value="ECO:0000318"/>
    <property type="project" value="GO_Central"/>
</dbReference>
<dbReference type="GO" id="GO:0046040">
    <property type="term" value="P:IMP metabolic process"/>
    <property type="evidence" value="ECO:0000318"/>
    <property type="project" value="GO_Central"/>
</dbReference>
<dbReference type="CDD" id="cd03108">
    <property type="entry name" value="AdSS"/>
    <property type="match status" value="1"/>
</dbReference>
<dbReference type="FunFam" id="3.90.170.10:FF:000001">
    <property type="entry name" value="Adenylosuccinate synthetase"/>
    <property type="match status" value="1"/>
</dbReference>
<dbReference type="FunFam" id="1.10.300.10:FF:000002">
    <property type="entry name" value="Adenylosuccinate synthetase, chloroplastic"/>
    <property type="match status" value="1"/>
</dbReference>
<dbReference type="Gene3D" id="3.40.440.10">
    <property type="entry name" value="Adenylosuccinate Synthetase, subunit A, domain 1"/>
    <property type="match status" value="1"/>
</dbReference>
<dbReference type="Gene3D" id="1.10.300.10">
    <property type="entry name" value="Adenylosuccinate Synthetase, subunit A, domain 2"/>
    <property type="match status" value="1"/>
</dbReference>
<dbReference type="Gene3D" id="3.90.170.10">
    <property type="entry name" value="Adenylosuccinate Synthetase, subunit A, domain 3"/>
    <property type="match status" value="1"/>
</dbReference>
<dbReference type="HAMAP" id="MF_00011">
    <property type="entry name" value="Adenylosucc_synth"/>
    <property type="match status" value="1"/>
</dbReference>
<dbReference type="InterPro" id="IPR018220">
    <property type="entry name" value="Adenylosuccin_syn_GTP-bd"/>
</dbReference>
<dbReference type="InterPro" id="IPR033128">
    <property type="entry name" value="Adenylosuccin_syn_Lys_AS"/>
</dbReference>
<dbReference type="InterPro" id="IPR042109">
    <property type="entry name" value="Adenylosuccinate_synth_dom1"/>
</dbReference>
<dbReference type="InterPro" id="IPR042110">
    <property type="entry name" value="Adenylosuccinate_synth_dom2"/>
</dbReference>
<dbReference type="InterPro" id="IPR042111">
    <property type="entry name" value="Adenylosuccinate_synth_dom3"/>
</dbReference>
<dbReference type="InterPro" id="IPR001114">
    <property type="entry name" value="Adenylosuccinate_synthetase"/>
</dbReference>
<dbReference type="InterPro" id="IPR027417">
    <property type="entry name" value="P-loop_NTPase"/>
</dbReference>
<dbReference type="NCBIfam" id="NF002223">
    <property type="entry name" value="PRK01117.1"/>
    <property type="match status" value="1"/>
</dbReference>
<dbReference type="NCBIfam" id="TIGR00184">
    <property type="entry name" value="purA"/>
    <property type="match status" value="1"/>
</dbReference>
<dbReference type="PANTHER" id="PTHR11846">
    <property type="entry name" value="ADENYLOSUCCINATE SYNTHETASE"/>
    <property type="match status" value="1"/>
</dbReference>
<dbReference type="PANTHER" id="PTHR11846:SF0">
    <property type="entry name" value="ADENYLOSUCCINATE SYNTHETASE"/>
    <property type="match status" value="1"/>
</dbReference>
<dbReference type="Pfam" id="PF00709">
    <property type="entry name" value="Adenylsucc_synt"/>
    <property type="match status" value="1"/>
</dbReference>
<dbReference type="SMART" id="SM00788">
    <property type="entry name" value="Adenylsucc_synt"/>
    <property type="match status" value="1"/>
</dbReference>
<dbReference type="SUPFAM" id="SSF52540">
    <property type="entry name" value="P-loop containing nucleoside triphosphate hydrolases"/>
    <property type="match status" value="1"/>
</dbReference>
<dbReference type="PROSITE" id="PS01266">
    <property type="entry name" value="ADENYLOSUCCIN_SYN_1"/>
    <property type="match status" value="1"/>
</dbReference>
<dbReference type="PROSITE" id="PS00513">
    <property type="entry name" value="ADENYLOSUCCIN_SYN_2"/>
    <property type="match status" value="1"/>
</dbReference>
<organism>
    <name type="scientific">Physcomitrium patens</name>
    <name type="common">Spreading-leaved earth moss</name>
    <name type="synonym">Physcomitrella patens</name>
    <dbReference type="NCBI Taxonomy" id="3218"/>
    <lineage>
        <taxon>Eukaryota</taxon>
        <taxon>Viridiplantae</taxon>
        <taxon>Streptophyta</taxon>
        <taxon>Embryophyta</taxon>
        <taxon>Bryophyta</taxon>
        <taxon>Bryophytina</taxon>
        <taxon>Bryopsida</taxon>
        <taxon>Funariidae</taxon>
        <taxon>Funariales</taxon>
        <taxon>Funariaceae</taxon>
        <taxon>Physcomitrium</taxon>
    </lineage>
</organism>
<sequence length="514" mass="55565">MAMAAAAAVASQGLVAASTQQQKKTSAKLSCNAAPVFSGKSFLRVKSGSNGAVRVRNVGVRCEAQAIERESVKADTGSGREEDAFSGLKQVCAVLGTQWGDEGKGKLVDILAQRFDVVARCQGGANAGHTIYNDKGEKFALHLVPSGILNEKTTCVVGNGVVIHLPGFFKEIDNLESKGVNTSGRLLVSDRAHLLFNLHQEVDGLREAELAGQMIGTTKRGIGPCYASKAIRNGIRVGDLRHLDTFREKLDILFRDAAARFKGFEYSAAAVDAEMEMYVKYAERLEHYIVDTVDYVNTAYAEGKRILIEGGQATMLDIDFGTYPFVTSSNPSVGGICTGLGMAPNRLGDIVGVAKAYTTRVGSGPYPTELFGEEGEELRKAGFEWGTTTGRPRRCGWLDIVALNFACTINGFTAINLTKLDVLSGLPEVKLGVAYRTQSGEKLRSFPADLSILEQVEVEYETLEAWKEDITKVRSYAELPVAAQKYVERIEELIGLPCQYIGVGPGRDALIVKQ</sequence>